<keyword id="KW-0108">Calcium channel impairing toxin</keyword>
<keyword id="KW-0903">Direct protein sequencing</keyword>
<keyword id="KW-1015">Disulfide bond</keyword>
<keyword id="KW-0301">Gamma-carboxyglutamic acid</keyword>
<keyword id="KW-0379">Hydroxylation</keyword>
<keyword id="KW-0872">Ion channel impairing toxin</keyword>
<keyword id="KW-0960">Knottin</keyword>
<keyword id="KW-0528">Neurotoxin</keyword>
<keyword id="KW-0964">Secreted</keyword>
<keyword id="KW-0800">Toxin</keyword>
<keyword id="KW-1218">Voltage-gated calcium channel impairing toxin</keyword>
<keyword id="KW-0738">Voltage-gated sodium channel impairing toxin</keyword>
<comment type="function">
    <text>May inhibit sodium (Nav) or calcium channels (Cav).</text>
</comment>
<comment type="subcellular location">
    <subcellularLocation>
        <location>Secreted</location>
    </subcellularLocation>
</comment>
<comment type="tissue specificity">
    <text>Expressed by the venom duct.</text>
</comment>
<comment type="domain">
    <text evidence="1">The presence of a 'disulfide through disulfide knot' structurally defines this protein as a knottin.</text>
</comment>
<comment type="domain">
    <text>The cysteine framework is VI/VII (C-C-CC-C-C).</text>
</comment>
<comment type="mass spectrometry">
    <text>without PTMs.</text>
</comment>
<comment type="mass spectrometry">
    <text>hydroxylated at 'Pro-14'.</text>
</comment>
<comment type="mass spectrometry">
    <text>hydroxylated at 'Pro-4' and 'Pro-14'.</text>
</comment>
<comment type="mass spectrometry">
    <text>carboxylated at 'Glu-7' and hydroxylated at 'Pro-14'.</text>
</comment>
<comment type="mass spectrometry">
    <text>carboxylated at 'Glu-7' and hydroxylated at 'Pro-4' and 'Pro-14'.</text>
</comment>
<evidence type="ECO:0000250" key="1"/>
<evidence type="ECO:0000269" key="2">
    <source>
    </source>
</evidence>
<name>U7B_CONDE</name>
<proteinExistence type="evidence at protein level"/>
<organism>
    <name type="scientific">Conasprella delessertii</name>
    <name type="common">Sozon's cone</name>
    <name type="synonym">Conus delessertii</name>
    <dbReference type="NCBI Taxonomy" id="2547900"/>
    <lineage>
        <taxon>Eukaryota</taxon>
        <taxon>Metazoa</taxon>
        <taxon>Spiralia</taxon>
        <taxon>Lophotrochozoa</taxon>
        <taxon>Mollusca</taxon>
        <taxon>Gastropoda</taxon>
        <taxon>Caenogastropoda</taxon>
        <taxon>Neogastropoda</taxon>
        <taxon>Conoidea</taxon>
        <taxon>Conidae</taxon>
        <taxon>Conasprella</taxon>
        <taxon>Kohniconus</taxon>
    </lineage>
</organism>
<protein>
    <recommendedName>
        <fullName>Conotoxin de7b</fullName>
    </recommendedName>
</protein>
<feature type="peptide" id="PRO_0000396801" description="Conotoxin de7b">
    <location>
        <begin position="1"/>
        <end position="28"/>
    </location>
</feature>
<feature type="modified residue" description="4-hydroxyproline; partial" evidence="2">
    <location>
        <position position="4"/>
    </location>
</feature>
<feature type="modified residue" description="4-carboxyglutamate; partial" evidence="2">
    <location>
        <position position="7"/>
    </location>
</feature>
<feature type="modified residue" description="4-hydroxyproline; partial" evidence="2">
    <location>
        <position position="14"/>
    </location>
</feature>
<feature type="disulfide bond" evidence="1">
    <location>
        <begin position="2"/>
        <end position="18"/>
    </location>
</feature>
<feature type="disulfide bond" evidence="1">
    <location>
        <begin position="9"/>
        <end position="22"/>
    </location>
</feature>
<feature type="disulfide bond" evidence="1">
    <location>
        <begin position="17"/>
        <end position="27"/>
    </location>
</feature>
<sequence>DCIPGGENCDVFRPYRCCSGYCILLLCA</sequence>
<reference key="1">
    <citation type="journal article" date="2009" name="Peptides">
        <title>Structural characterization of five post-translationally modified isomorphs of a novel putative delta-conotoxin from the vermivorous snail Conus delessertii from the Mexican Caribbean Sea.</title>
        <authorList>
            <person name="Aguilar M.B."/>
            <person name="Flores-Torres A."/>
            <person name="Batista C.V.F."/>
            <person name="Falcon A."/>
            <person name="Lopez-Vera E."/>
            <person name="de la Cotera E.P.H."/>
        </authorList>
    </citation>
    <scope>PROTEIN SEQUENCE</scope>
    <scope>MASS SPECTROMETRY</scope>
    <scope>HYDROXYLATION AT PRO-4</scope>
    <scope>GAMMA-CARBOXYGLUTAMATION AT GLU-7</scope>
    <scope>HYDROXYLATION AT PRO-14</scope>
    <source>
        <tissue>Venom</tissue>
    </source>
</reference>
<dbReference type="SMR" id="P0CH13"/>
<dbReference type="ConoServer" id="3629">
    <property type="toxin name" value="De7b"/>
</dbReference>
<dbReference type="GO" id="GO:0005576">
    <property type="term" value="C:extracellular region"/>
    <property type="evidence" value="ECO:0007669"/>
    <property type="project" value="UniProtKB-SubCell"/>
</dbReference>
<dbReference type="GO" id="GO:0005246">
    <property type="term" value="F:calcium channel regulator activity"/>
    <property type="evidence" value="ECO:0007669"/>
    <property type="project" value="UniProtKB-KW"/>
</dbReference>
<dbReference type="GO" id="GO:0017080">
    <property type="term" value="F:sodium channel regulator activity"/>
    <property type="evidence" value="ECO:0007669"/>
    <property type="project" value="UniProtKB-KW"/>
</dbReference>
<dbReference type="GO" id="GO:0090729">
    <property type="term" value="F:toxin activity"/>
    <property type="evidence" value="ECO:0007669"/>
    <property type="project" value="UniProtKB-KW"/>
</dbReference>
<accession>P0CH13</accession>